<comment type="function">
    <text evidence="1">The beta subunit is responsible for the synthesis of L-tryptophan from indole and L-serine.</text>
</comment>
<comment type="catalytic activity">
    <reaction evidence="1">
        <text>(1S,2R)-1-C-(indol-3-yl)glycerol 3-phosphate + L-serine = D-glyceraldehyde 3-phosphate + L-tryptophan + H2O</text>
        <dbReference type="Rhea" id="RHEA:10532"/>
        <dbReference type="ChEBI" id="CHEBI:15377"/>
        <dbReference type="ChEBI" id="CHEBI:33384"/>
        <dbReference type="ChEBI" id="CHEBI:57912"/>
        <dbReference type="ChEBI" id="CHEBI:58866"/>
        <dbReference type="ChEBI" id="CHEBI:59776"/>
        <dbReference type="EC" id="4.2.1.20"/>
    </reaction>
</comment>
<comment type="cofactor">
    <cofactor evidence="1">
        <name>pyridoxal 5'-phosphate</name>
        <dbReference type="ChEBI" id="CHEBI:597326"/>
    </cofactor>
</comment>
<comment type="pathway">
    <text evidence="1">Amino-acid biosynthesis; L-tryptophan biosynthesis; L-tryptophan from chorismate: step 5/5.</text>
</comment>
<comment type="subunit">
    <text evidence="1">Tetramer of two alpha and two beta chains.</text>
</comment>
<comment type="similarity">
    <text evidence="1">Belongs to the TrpB family.</text>
</comment>
<proteinExistence type="inferred from homology"/>
<gene>
    <name evidence="1" type="primary">trpB</name>
    <name type="ordered locus">HH_1415</name>
</gene>
<keyword id="KW-0028">Amino-acid biosynthesis</keyword>
<keyword id="KW-0057">Aromatic amino acid biosynthesis</keyword>
<keyword id="KW-0456">Lyase</keyword>
<keyword id="KW-0663">Pyridoxal phosphate</keyword>
<keyword id="KW-1185">Reference proteome</keyword>
<keyword id="KW-0822">Tryptophan biosynthesis</keyword>
<protein>
    <recommendedName>
        <fullName evidence="1">Tryptophan synthase beta chain</fullName>
        <ecNumber evidence="1">4.2.1.20</ecNumber>
    </recommendedName>
</protein>
<organism>
    <name type="scientific">Helicobacter hepaticus (strain ATCC 51449 / 3B1)</name>
    <dbReference type="NCBI Taxonomy" id="235279"/>
    <lineage>
        <taxon>Bacteria</taxon>
        <taxon>Pseudomonadati</taxon>
        <taxon>Campylobacterota</taxon>
        <taxon>Epsilonproteobacteria</taxon>
        <taxon>Campylobacterales</taxon>
        <taxon>Helicobacteraceae</taxon>
        <taxon>Helicobacter</taxon>
    </lineage>
</organism>
<sequence>MKKKIFTESKNGYFGEAKGGNHAFGGQYIPEILLPALKELEKAYHGVFVSKAYKKELKSLFKHFVGRPTPLIYAHNASKILKNDIYLKFEGLANTGAHKINNALGQVLLAKHMKKKRVIAETGAGQHGLATAAACARLGLECEIFMGEIDIARQRPNVFNMELFGAKVHSVSSGSKTLKDAVNEALREWSKRSDDSFYVLGSALGPYPYPDIVRDLQSVISKELKKQTKAYFSSLPDILVACVGGGSNAMGFFTHYLKEERVRLIGVEAGGIGDKEGENAIRINTINASEGIAQGYKSLFLQDKDGQLSDTHSISAGLDYAGIGPQLAHLYEVGRVEFQSATDKEALEALSFFAQYEGIIPALESSHALAAVIRLCKDIKGKKIIANISGRGDKDIFITAKALTPEHWKTFLSEEIARIG</sequence>
<accession>Q7VGA7</accession>
<name>TRPB_HELHP</name>
<evidence type="ECO:0000255" key="1">
    <source>
        <dbReference type="HAMAP-Rule" id="MF_00133"/>
    </source>
</evidence>
<dbReference type="EC" id="4.2.1.20" evidence="1"/>
<dbReference type="EMBL" id="AE017125">
    <property type="protein sequence ID" value="AAP78012.1"/>
    <property type="molecule type" value="Genomic_DNA"/>
</dbReference>
<dbReference type="RefSeq" id="WP_011116255.1">
    <property type="nucleotide sequence ID" value="NC_004917.1"/>
</dbReference>
<dbReference type="SMR" id="Q7VGA7"/>
<dbReference type="STRING" id="235279.HH_1415"/>
<dbReference type="KEGG" id="hhe:HH_1415"/>
<dbReference type="eggNOG" id="COG0133">
    <property type="taxonomic scope" value="Bacteria"/>
</dbReference>
<dbReference type="HOGENOM" id="CLU_016734_3_1_7"/>
<dbReference type="OrthoDB" id="9766131at2"/>
<dbReference type="UniPathway" id="UPA00035">
    <property type="reaction ID" value="UER00044"/>
</dbReference>
<dbReference type="Proteomes" id="UP000002495">
    <property type="component" value="Chromosome"/>
</dbReference>
<dbReference type="GO" id="GO:0005737">
    <property type="term" value="C:cytoplasm"/>
    <property type="evidence" value="ECO:0007669"/>
    <property type="project" value="TreeGrafter"/>
</dbReference>
<dbReference type="GO" id="GO:0004834">
    <property type="term" value="F:tryptophan synthase activity"/>
    <property type="evidence" value="ECO:0007669"/>
    <property type="project" value="UniProtKB-UniRule"/>
</dbReference>
<dbReference type="CDD" id="cd06446">
    <property type="entry name" value="Trp-synth_B"/>
    <property type="match status" value="1"/>
</dbReference>
<dbReference type="FunFam" id="3.40.50.1100:FF:000001">
    <property type="entry name" value="Tryptophan synthase beta chain"/>
    <property type="match status" value="1"/>
</dbReference>
<dbReference type="FunFam" id="3.40.50.1100:FF:000004">
    <property type="entry name" value="Tryptophan synthase beta chain"/>
    <property type="match status" value="1"/>
</dbReference>
<dbReference type="Gene3D" id="3.40.50.1100">
    <property type="match status" value="2"/>
</dbReference>
<dbReference type="HAMAP" id="MF_00133">
    <property type="entry name" value="Trp_synth_beta"/>
    <property type="match status" value="1"/>
</dbReference>
<dbReference type="InterPro" id="IPR006653">
    <property type="entry name" value="Trp_synth_b_CS"/>
</dbReference>
<dbReference type="InterPro" id="IPR006654">
    <property type="entry name" value="Trp_synth_beta"/>
</dbReference>
<dbReference type="InterPro" id="IPR023026">
    <property type="entry name" value="Trp_synth_beta/beta-like"/>
</dbReference>
<dbReference type="InterPro" id="IPR001926">
    <property type="entry name" value="TrpB-like_PALP"/>
</dbReference>
<dbReference type="InterPro" id="IPR036052">
    <property type="entry name" value="TrpB-like_PALP_sf"/>
</dbReference>
<dbReference type="NCBIfam" id="TIGR00263">
    <property type="entry name" value="trpB"/>
    <property type="match status" value="1"/>
</dbReference>
<dbReference type="PANTHER" id="PTHR48077:SF3">
    <property type="entry name" value="TRYPTOPHAN SYNTHASE"/>
    <property type="match status" value="1"/>
</dbReference>
<dbReference type="PANTHER" id="PTHR48077">
    <property type="entry name" value="TRYPTOPHAN SYNTHASE-RELATED"/>
    <property type="match status" value="1"/>
</dbReference>
<dbReference type="Pfam" id="PF00291">
    <property type="entry name" value="PALP"/>
    <property type="match status" value="1"/>
</dbReference>
<dbReference type="PIRSF" id="PIRSF001413">
    <property type="entry name" value="Trp_syn_beta"/>
    <property type="match status" value="1"/>
</dbReference>
<dbReference type="SUPFAM" id="SSF53686">
    <property type="entry name" value="Tryptophan synthase beta subunit-like PLP-dependent enzymes"/>
    <property type="match status" value="1"/>
</dbReference>
<dbReference type="PROSITE" id="PS00168">
    <property type="entry name" value="TRP_SYNTHASE_BETA"/>
    <property type="match status" value="1"/>
</dbReference>
<feature type="chain" id="PRO_0000098954" description="Tryptophan synthase beta chain">
    <location>
        <begin position="1"/>
        <end position="420"/>
    </location>
</feature>
<feature type="modified residue" description="N6-(pyridoxal phosphate)lysine" evidence="1">
    <location>
        <position position="99"/>
    </location>
</feature>
<reference key="1">
    <citation type="journal article" date="2003" name="Proc. Natl. Acad. Sci. U.S.A.">
        <title>The complete genome sequence of the carcinogenic bacterium Helicobacter hepaticus.</title>
        <authorList>
            <person name="Suerbaum S."/>
            <person name="Josenhans C."/>
            <person name="Sterzenbach T."/>
            <person name="Drescher B."/>
            <person name="Brandt P."/>
            <person name="Bell M."/>
            <person name="Droege M."/>
            <person name="Fartmann B."/>
            <person name="Fischer H.-P."/>
            <person name="Ge Z."/>
            <person name="Hoerster A."/>
            <person name="Holland R."/>
            <person name="Klein K."/>
            <person name="Koenig J."/>
            <person name="Macko L."/>
            <person name="Mendz G.L."/>
            <person name="Nyakatura G."/>
            <person name="Schauer D.B."/>
            <person name="Shen Z."/>
            <person name="Weber J."/>
            <person name="Frosch M."/>
            <person name="Fox J.G."/>
        </authorList>
    </citation>
    <scope>NUCLEOTIDE SEQUENCE [LARGE SCALE GENOMIC DNA]</scope>
    <source>
        <strain>ATCC 51449 / 3B1</strain>
    </source>
</reference>